<comment type="similarity">
    <text evidence="1">Belongs to the bacterial ribosomal protein bS16 family.</text>
</comment>
<keyword id="KW-1185">Reference proteome</keyword>
<keyword id="KW-0687">Ribonucleoprotein</keyword>
<keyword id="KW-0689">Ribosomal protein</keyword>
<feature type="chain" id="PRO_1000072191" description="Small ribosomal subunit protein bS16">
    <location>
        <begin position="1"/>
        <end position="82"/>
    </location>
</feature>
<reference key="1">
    <citation type="journal article" date="2010" name="BMC Genomics">
        <title>A genomic perspective on the potential of Actinobacillus succinogenes for industrial succinate production.</title>
        <authorList>
            <person name="McKinlay J.B."/>
            <person name="Laivenieks M."/>
            <person name="Schindler B.D."/>
            <person name="McKinlay A.A."/>
            <person name="Siddaramappa S."/>
            <person name="Challacombe J.F."/>
            <person name="Lowry S.R."/>
            <person name="Clum A."/>
            <person name="Lapidus A.L."/>
            <person name="Burkhart K.B."/>
            <person name="Harkins V."/>
            <person name="Vieille C."/>
        </authorList>
    </citation>
    <scope>NUCLEOTIDE SEQUENCE [LARGE SCALE GENOMIC DNA]</scope>
    <source>
        <strain>ATCC 55618 / DSM 22257 / CCUG 43843 / 130Z</strain>
    </source>
</reference>
<sequence length="82" mass="9173">MVTIRLSRGGAKKRPFYQIVVADSRSPRDGRFIERVGFFNPLATGKAERLRLDLDRVNAWVEKGASLSDRVSALVKEVQKAA</sequence>
<dbReference type="EMBL" id="CP000746">
    <property type="protein sequence ID" value="ABR73895.1"/>
    <property type="molecule type" value="Genomic_DNA"/>
</dbReference>
<dbReference type="RefSeq" id="WP_012072275.1">
    <property type="nucleotide sequence ID" value="NC_009655.1"/>
</dbReference>
<dbReference type="SMR" id="A6VLP8"/>
<dbReference type="STRING" id="339671.Asuc_0520"/>
<dbReference type="KEGG" id="asu:Asuc_0520"/>
<dbReference type="eggNOG" id="COG0228">
    <property type="taxonomic scope" value="Bacteria"/>
</dbReference>
<dbReference type="HOGENOM" id="CLU_100590_5_1_6"/>
<dbReference type="OrthoDB" id="9807878at2"/>
<dbReference type="Proteomes" id="UP000001114">
    <property type="component" value="Chromosome"/>
</dbReference>
<dbReference type="GO" id="GO:0005737">
    <property type="term" value="C:cytoplasm"/>
    <property type="evidence" value="ECO:0007669"/>
    <property type="project" value="UniProtKB-ARBA"/>
</dbReference>
<dbReference type="GO" id="GO:0015935">
    <property type="term" value="C:small ribosomal subunit"/>
    <property type="evidence" value="ECO:0007669"/>
    <property type="project" value="TreeGrafter"/>
</dbReference>
<dbReference type="GO" id="GO:0003735">
    <property type="term" value="F:structural constituent of ribosome"/>
    <property type="evidence" value="ECO:0007669"/>
    <property type="project" value="InterPro"/>
</dbReference>
<dbReference type="GO" id="GO:0006412">
    <property type="term" value="P:translation"/>
    <property type="evidence" value="ECO:0007669"/>
    <property type="project" value="UniProtKB-UniRule"/>
</dbReference>
<dbReference type="FunFam" id="3.30.1320.10:FF:000001">
    <property type="entry name" value="30S ribosomal protein S16"/>
    <property type="match status" value="1"/>
</dbReference>
<dbReference type="Gene3D" id="3.30.1320.10">
    <property type="match status" value="1"/>
</dbReference>
<dbReference type="HAMAP" id="MF_00385">
    <property type="entry name" value="Ribosomal_bS16"/>
    <property type="match status" value="1"/>
</dbReference>
<dbReference type="InterPro" id="IPR000307">
    <property type="entry name" value="Ribosomal_bS16"/>
</dbReference>
<dbReference type="InterPro" id="IPR020592">
    <property type="entry name" value="Ribosomal_bS16_CS"/>
</dbReference>
<dbReference type="InterPro" id="IPR023803">
    <property type="entry name" value="Ribosomal_bS16_dom_sf"/>
</dbReference>
<dbReference type="NCBIfam" id="TIGR00002">
    <property type="entry name" value="S16"/>
    <property type="match status" value="1"/>
</dbReference>
<dbReference type="PANTHER" id="PTHR12919">
    <property type="entry name" value="30S RIBOSOMAL PROTEIN S16"/>
    <property type="match status" value="1"/>
</dbReference>
<dbReference type="PANTHER" id="PTHR12919:SF20">
    <property type="entry name" value="SMALL RIBOSOMAL SUBUNIT PROTEIN BS16M"/>
    <property type="match status" value="1"/>
</dbReference>
<dbReference type="Pfam" id="PF00886">
    <property type="entry name" value="Ribosomal_S16"/>
    <property type="match status" value="1"/>
</dbReference>
<dbReference type="SUPFAM" id="SSF54565">
    <property type="entry name" value="Ribosomal protein S16"/>
    <property type="match status" value="1"/>
</dbReference>
<dbReference type="PROSITE" id="PS00732">
    <property type="entry name" value="RIBOSOMAL_S16"/>
    <property type="match status" value="1"/>
</dbReference>
<organism>
    <name type="scientific">Actinobacillus succinogenes (strain ATCC 55618 / DSM 22257 / CCUG 43843 / 130Z)</name>
    <dbReference type="NCBI Taxonomy" id="339671"/>
    <lineage>
        <taxon>Bacteria</taxon>
        <taxon>Pseudomonadati</taxon>
        <taxon>Pseudomonadota</taxon>
        <taxon>Gammaproteobacteria</taxon>
        <taxon>Pasteurellales</taxon>
        <taxon>Pasteurellaceae</taxon>
        <taxon>Actinobacillus</taxon>
    </lineage>
</organism>
<evidence type="ECO:0000255" key="1">
    <source>
        <dbReference type="HAMAP-Rule" id="MF_00385"/>
    </source>
</evidence>
<evidence type="ECO:0000305" key="2"/>
<name>RS16_ACTSZ</name>
<proteinExistence type="inferred from homology"/>
<gene>
    <name evidence="1" type="primary">rpsP</name>
    <name type="ordered locus">Asuc_0520</name>
</gene>
<accession>A6VLP8</accession>
<protein>
    <recommendedName>
        <fullName evidence="1">Small ribosomal subunit protein bS16</fullName>
    </recommendedName>
    <alternativeName>
        <fullName evidence="2">30S ribosomal protein S16</fullName>
    </alternativeName>
</protein>